<organism>
    <name type="scientific">Clostridium perfringens (strain ATCC 13124 / DSM 756 / JCM 1290 / NCIMB 6125 / NCTC 8237 / Type A)</name>
    <dbReference type="NCBI Taxonomy" id="195103"/>
    <lineage>
        <taxon>Bacteria</taxon>
        <taxon>Bacillati</taxon>
        <taxon>Bacillota</taxon>
        <taxon>Clostridia</taxon>
        <taxon>Eubacteriales</taxon>
        <taxon>Clostridiaceae</taxon>
        <taxon>Clostridium</taxon>
    </lineage>
</organism>
<protein>
    <recommendedName>
        <fullName evidence="1">Large ribosomal subunit protein uL29</fullName>
    </recommendedName>
    <alternativeName>
        <fullName evidence="2">50S ribosomal protein L29</fullName>
    </alternativeName>
</protein>
<reference key="1">
    <citation type="journal article" date="2006" name="Genome Res.">
        <title>Skewed genomic variability in strains of the toxigenic bacterial pathogen, Clostridium perfringens.</title>
        <authorList>
            <person name="Myers G.S.A."/>
            <person name="Rasko D.A."/>
            <person name="Cheung J.K."/>
            <person name="Ravel J."/>
            <person name="Seshadri R."/>
            <person name="DeBoy R.T."/>
            <person name="Ren Q."/>
            <person name="Varga J."/>
            <person name="Awad M.M."/>
            <person name="Brinkac L.M."/>
            <person name="Daugherty S.C."/>
            <person name="Haft D.H."/>
            <person name="Dodson R.J."/>
            <person name="Madupu R."/>
            <person name="Nelson W.C."/>
            <person name="Rosovitz M.J."/>
            <person name="Sullivan S.A."/>
            <person name="Khouri H."/>
            <person name="Dimitrov G.I."/>
            <person name="Watkins K.L."/>
            <person name="Mulligan S."/>
            <person name="Benton J."/>
            <person name="Radune D."/>
            <person name="Fisher D.J."/>
            <person name="Atkins H.S."/>
            <person name="Hiscox T."/>
            <person name="Jost B.H."/>
            <person name="Billington S.J."/>
            <person name="Songer J.G."/>
            <person name="McClane B.A."/>
            <person name="Titball R.W."/>
            <person name="Rood J.I."/>
            <person name="Melville S.B."/>
            <person name="Paulsen I.T."/>
        </authorList>
    </citation>
    <scope>NUCLEOTIDE SEQUENCE [LARGE SCALE GENOMIC DNA]</scope>
    <source>
        <strain>ATCC 13124 / DSM 756 / JCM 1290 / NCIMB 6125 / NCTC 8237 / S 107 / Type A</strain>
    </source>
</reference>
<feature type="chain" id="PRO_1000007460" description="Large ribosomal subunit protein uL29">
    <location>
        <begin position="1"/>
        <end position="69"/>
    </location>
</feature>
<evidence type="ECO:0000255" key="1">
    <source>
        <dbReference type="HAMAP-Rule" id="MF_00374"/>
    </source>
</evidence>
<evidence type="ECO:0000305" key="2"/>
<keyword id="KW-0687">Ribonucleoprotein</keyword>
<keyword id="KW-0689">Ribosomal protein</keyword>
<sequence length="69" mass="8134">MKARELKELRTSNPQDLIKKLGDLKAELFNLRFQLATGQLENPMRIREVKKSIAQIKTIIREEELKIEQ</sequence>
<proteinExistence type="inferred from homology"/>
<accession>Q0TMQ4</accession>
<name>RL29_CLOP1</name>
<dbReference type="EMBL" id="CP000246">
    <property type="protein sequence ID" value="ABG84653.1"/>
    <property type="molecule type" value="Genomic_DNA"/>
</dbReference>
<dbReference type="RefSeq" id="WP_003454396.1">
    <property type="nucleotide sequence ID" value="NC_008261.1"/>
</dbReference>
<dbReference type="SMR" id="Q0TMQ4"/>
<dbReference type="STRING" id="195103.CPF_2706"/>
<dbReference type="PaxDb" id="195103-CPF_2706"/>
<dbReference type="GeneID" id="93001017"/>
<dbReference type="KEGG" id="cpf:CPF_2706"/>
<dbReference type="eggNOG" id="COG0255">
    <property type="taxonomic scope" value="Bacteria"/>
</dbReference>
<dbReference type="HOGENOM" id="CLU_158491_5_2_9"/>
<dbReference type="Proteomes" id="UP000001823">
    <property type="component" value="Chromosome"/>
</dbReference>
<dbReference type="GO" id="GO:0022625">
    <property type="term" value="C:cytosolic large ribosomal subunit"/>
    <property type="evidence" value="ECO:0007669"/>
    <property type="project" value="TreeGrafter"/>
</dbReference>
<dbReference type="GO" id="GO:0003735">
    <property type="term" value="F:structural constituent of ribosome"/>
    <property type="evidence" value="ECO:0007669"/>
    <property type="project" value="InterPro"/>
</dbReference>
<dbReference type="GO" id="GO:0006412">
    <property type="term" value="P:translation"/>
    <property type="evidence" value="ECO:0007669"/>
    <property type="project" value="UniProtKB-UniRule"/>
</dbReference>
<dbReference type="CDD" id="cd00427">
    <property type="entry name" value="Ribosomal_L29_HIP"/>
    <property type="match status" value="1"/>
</dbReference>
<dbReference type="FunFam" id="1.10.287.310:FF:000001">
    <property type="entry name" value="50S ribosomal protein L29"/>
    <property type="match status" value="1"/>
</dbReference>
<dbReference type="Gene3D" id="1.10.287.310">
    <property type="match status" value="1"/>
</dbReference>
<dbReference type="HAMAP" id="MF_00374">
    <property type="entry name" value="Ribosomal_uL29"/>
    <property type="match status" value="1"/>
</dbReference>
<dbReference type="InterPro" id="IPR050063">
    <property type="entry name" value="Ribosomal_protein_uL29"/>
</dbReference>
<dbReference type="InterPro" id="IPR001854">
    <property type="entry name" value="Ribosomal_uL29"/>
</dbReference>
<dbReference type="InterPro" id="IPR018254">
    <property type="entry name" value="Ribosomal_uL29_CS"/>
</dbReference>
<dbReference type="InterPro" id="IPR036049">
    <property type="entry name" value="Ribosomal_uL29_sf"/>
</dbReference>
<dbReference type="NCBIfam" id="TIGR00012">
    <property type="entry name" value="L29"/>
    <property type="match status" value="1"/>
</dbReference>
<dbReference type="PANTHER" id="PTHR10916">
    <property type="entry name" value="60S RIBOSOMAL PROTEIN L35/50S RIBOSOMAL PROTEIN L29"/>
    <property type="match status" value="1"/>
</dbReference>
<dbReference type="PANTHER" id="PTHR10916:SF0">
    <property type="entry name" value="LARGE RIBOSOMAL SUBUNIT PROTEIN UL29C"/>
    <property type="match status" value="1"/>
</dbReference>
<dbReference type="Pfam" id="PF00831">
    <property type="entry name" value="Ribosomal_L29"/>
    <property type="match status" value="1"/>
</dbReference>
<dbReference type="SUPFAM" id="SSF46561">
    <property type="entry name" value="Ribosomal protein L29 (L29p)"/>
    <property type="match status" value="1"/>
</dbReference>
<dbReference type="PROSITE" id="PS00579">
    <property type="entry name" value="RIBOSOMAL_L29"/>
    <property type="match status" value="1"/>
</dbReference>
<gene>
    <name evidence="1" type="primary">rpmC</name>
    <name type="ordered locus">CPF_2706</name>
</gene>
<comment type="similarity">
    <text evidence="1">Belongs to the universal ribosomal protein uL29 family.</text>
</comment>